<name>AC4_BGYMV</name>
<feature type="chain" id="PRO_0000323687" description="Protein AC4">
    <location>
        <begin position="1"/>
        <end position="79"/>
    </location>
</feature>
<feature type="region of interest" description="Disordered" evidence="2">
    <location>
        <begin position="1"/>
        <end position="79"/>
    </location>
</feature>
<feature type="compositionally biased region" description="Polar residues" evidence="2">
    <location>
        <begin position="1"/>
        <end position="13"/>
    </location>
</feature>
<feature type="compositionally biased region" description="Polar residues" evidence="2">
    <location>
        <begin position="38"/>
        <end position="79"/>
    </location>
</feature>
<dbReference type="EMBL" id="M10070">
    <property type="status" value="NOT_ANNOTATED_CDS"/>
    <property type="molecule type" value="Genomic_DNA"/>
</dbReference>
<dbReference type="SMR" id="P0C6G0"/>
<dbReference type="Proteomes" id="UP000006572">
    <property type="component" value="Genome"/>
</dbReference>
<dbReference type="GO" id="GO:0052170">
    <property type="term" value="P:symbiont-mediated suppression of host innate immune response"/>
    <property type="evidence" value="ECO:0007669"/>
    <property type="project" value="UniProtKB-KW"/>
</dbReference>
<dbReference type="InterPro" id="IPR002488">
    <property type="entry name" value="Gemini_C4"/>
</dbReference>
<dbReference type="Pfam" id="PF01492">
    <property type="entry name" value="Gemini_C4"/>
    <property type="match status" value="1"/>
</dbReference>
<reference key="1">
    <citation type="journal article" date="1985" name="Proc. Natl. Acad. Sci. U.S.A.">
        <title>Nucleotide sequence of bean golden mosaic virus and a model for gene regulation in geminiviruses.</title>
        <authorList>
            <person name="Howarth A.J."/>
            <person name="Caton J."/>
            <person name="Bossert M."/>
            <person name="Goodman R.M."/>
        </authorList>
    </citation>
    <scope>NUCLEOTIDE SEQUENCE [GENOMIC DNA]</scope>
</reference>
<protein>
    <recommendedName>
        <fullName>Protein AC4</fullName>
    </recommendedName>
    <alternativeName>
        <fullName>Protein AL4</fullName>
    </alternativeName>
</protein>
<accession>P0C6G0</accession>
<gene>
    <name type="ORF">AC4</name>
    <name type="ORF">AL4</name>
</gene>
<organism>
    <name type="scientific">Bean golden yellow mosaic virus (isolate Puerto Rico)</name>
    <name type="common">BGYMV</name>
    <name type="synonym">Bean golden mosaic virus (isolate Puerto Rico)</name>
    <dbReference type="NCBI Taxonomy" id="222448"/>
    <lineage>
        <taxon>Viruses</taxon>
        <taxon>Monodnaviria</taxon>
        <taxon>Shotokuvirae</taxon>
        <taxon>Cressdnaviricota</taxon>
        <taxon>Repensiviricetes</taxon>
        <taxon>Geplafuvirales</taxon>
        <taxon>Geminiviridae</taxon>
        <taxon>Begomovirus</taxon>
        <taxon>Bean golden yellow mosaic virus</taxon>
    </lineage>
</organism>
<evidence type="ECO:0000250" key="1"/>
<evidence type="ECO:0000256" key="2">
    <source>
        <dbReference type="SAM" id="MobiDB-lite"/>
    </source>
</evidence>
<evidence type="ECO:0000305" key="3"/>
<organismHost>
    <name type="scientific">Macroptilium lathyroides</name>
    <dbReference type="NCBI Taxonomy" id="260885"/>
</organismHost>
<organismHost>
    <name type="scientific">Malvastrum coromandelianum</name>
    <dbReference type="NCBI Taxonomy" id="108453"/>
</organismHost>
<organismHost>
    <name type="scientific">Phaseolus lunatus</name>
    <name type="common">Lima bean</name>
    <name type="synonym">Phaseolus limensis</name>
    <dbReference type="NCBI Taxonomy" id="3884"/>
</organismHost>
<organismHost>
    <name type="scientific">Phaseolus vulgaris</name>
    <name type="common">Kidney bean</name>
    <name type="synonym">French bean</name>
    <dbReference type="NCBI Taxonomy" id="3885"/>
</organismHost>
<keyword id="KW-0945">Host-virus interaction</keyword>
<keyword id="KW-1090">Inhibition of host innate immune response by virus</keyword>
<keyword id="KW-1185">Reference proteome</keyword>
<keyword id="KW-0941">Suppressor of RNA silencing</keyword>
<keyword id="KW-0899">Viral immunoevasion</keyword>
<proteinExistence type="inferred from homology"/>
<comment type="function">
    <text evidence="1">Pathogenicity determinant (By similarity). May act as a suppressor of RNA-mediated gene silencing, also known as post-transcriptional gene silencing (PTGS), a mechanism of plant viral defense that limits the accumulation of viral RNAs.</text>
</comment>
<comment type="similarity">
    <text evidence="3">Belongs to the geminiviridae protein AC4/C4 family.</text>
</comment>
<sequence length="79" mass="8897">MRLFSSKVNSSAQIKDCSTWYPQPGQHISIRTFRELNQVPTSKNTSTKMESQSNGDNSKSTADLQEEVSSLPTTHTQRH</sequence>